<comment type="function">
    <text evidence="1">This protein binds specifically to 23S rRNA. It makes multiple contacts with different domains of the 23S rRNA in the assembled 50S subunit and ribosome.</text>
</comment>
<comment type="function">
    <text evidence="1">The globular domain of the protein is located near the polypeptide exit tunnel on the outside of the subunit, while an extended beta-hairpin is found that lines the wall of the exit tunnel in the center of the 70S ribosome.</text>
</comment>
<comment type="subunit">
    <text evidence="1">Part of the 50S ribosomal subunit.</text>
</comment>
<comment type="similarity">
    <text evidence="1">Belongs to the universal ribosomal protein uL22 family.</text>
</comment>
<keyword id="KW-1185">Reference proteome</keyword>
<keyword id="KW-0687">Ribonucleoprotein</keyword>
<keyword id="KW-0689">Ribosomal protein</keyword>
<keyword id="KW-0694">RNA-binding</keyword>
<keyword id="KW-0699">rRNA-binding</keyword>
<name>RL22_METLZ</name>
<feature type="chain" id="PRO_1000052606" description="Large ribosomal subunit protein uL22">
    <location>
        <begin position="1"/>
        <end position="157"/>
    </location>
</feature>
<dbReference type="EMBL" id="CP000559">
    <property type="protein sequence ID" value="ABN06264.1"/>
    <property type="molecule type" value="Genomic_DNA"/>
</dbReference>
<dbReference type="RefSeq" id="WP_011832465.1">
    <property type="nucleotide sequence ID" value="NC_008942.1"/>
</dbReference>
<dbReference type="SMR" id="A2SPK8"/>
<dbReference type="STRING" id="410358.Mlab_0086"/>
<dbReference type="GeneID" id="4795567"/>
<dbReference type="KEGG" id="mla:Mlab_0086"/>
<dbReference type="eggNOG" id="arCOG04098">
    <property type="taxonomic scope" value="Archaea"/>
</dbReference>
<dbReference type="HOGENOM" id="CLU_083987_0_2_2"/>
<dbReference type="OrthoDB" id="314984at2157"/>
<dbReference type="Proteomes" id="UP000000365">
    <property type="component" value="Chromosome"/>
</dbReference>
<dbReference type="GO" id="GO:0022625">
    <property type="term" value="C:cytosolic large ribosomal subunit"/>
    <property type="evidence" value="ECO:0007669"/>
    <property type="project" value="TreeGrafter"/>
</dbReference>
<dbReference type="GO" id="GO:0019843">
    <property type="term" value="F:rRNA binding"/>
    <property type="evidence" value="ECO:0007669"/>
    <property type="project" value="UniProtKB-UniRule"/>
</dbReference>
<dbReference type="GO" id="GO:0003735">
    <property type="term" value="F:structural constituent of ribosome"/>
    <property type="evidence" value="ECO:0007669"/>
    <property type="project" value="InterPro"/>
</dbReference>
<dbReference type="GO" id="GO:0002181">
    <property type="term" value="P:cytoplasmic translation"/>
    <property type="evidence" value="ECO:0007669"/>
    <property type="project" value="TreeGrafter"/>
</dbReference>
<dbReference type="CDD" id="cd00336">
    <property type="entry name" value="Ribosomal_L22"/>
    <property type="match status" value="1"/>
</dbReference>
<dbReference type="Gene3D" id="3.90.470.10">
    <property type="entry name" value="Ribosomal protein L22/L17"/>
    <property type="match status" value="1"/>
</dbReference>
<dbReference type="HAMAP" id="MF_01331_A">
    <property type="entry name" value="Ribosomal_uL22_A"/>
    <property type="match status" value="1"/>
</dbReference>
<dbReference type="InterPro" id="IPR001063">
    <property type="entry name" value="Ribosomal_uL22"/>
</dbReference>
<dbReference type="InterPro" id="IPR018260">
    <property type="entry name" value="Ribosomal_uL22_CS"/>
</dbReference>
<dbReference type="InterPro" id="IPR005721">
    <property type="entry name" value="Ribosomal_uL22_euk/arc"/>
</dbReference>
<dbReference type="InterPro" id="IPR036394">
    <property type="entry name" value="Ribosomal_uL22_sf"/>
</dbReference>
<dbReference type="NCBIfam" id="NF003260">
    <property type="entry name" value="PRK04223.1"/>
    <property type="match status" value="1"/>
</dbReference>
<dbReference type="NCBIfam" id="TIGR01038">
    <property type="entry name" value="uL22_arch_euk"/>
    <property type="match status" value="1"/>
</dbReference>
<dbReference type="PANTHER" id="PTHR11593">
    <property type="entry name" value="60S RIBOSOMAL PROTEIN L17"/>
    <property type="match status" value="1"/>
</dbReference>
<dbReference type="PANTHER" id="PTHR11593:SF10">
    <property type="entry name" value="60S RIBOSOMAL PROTEIN L17"/>
    <property type="match status" value="1"/>
</dbReference>
<dbReference type="Pfam" id="PF00237">
    <property type="entry name" value="Ribosomal_L22"/>
    <property type="match status" value="1"/>
</dbReference>
<dbReference type="SUPFAM" id="SSF54843">
    <property type="entry name" value="Ribosomal protein L22"/>
    <property type="match status" value="1"/>
</dbReference>
<dbReference type="PROSITE" id="PS00464">
    <property type="entry name" value="RIBOSOMAL_L22"/>
    <property type="match status" value="1"/>
</dbReference>
<gene>
    <name evidence="1" type="primary">rpl22</name>
    <name type="ordered locus">Mlab_0086</name>
</gene>
<evidence type="ECO:0000255" key="1">
    <source>
        <dbReference type="HAMAP-Rule" id="MF_01331"/>
    </source>
</evidence>
<evidence type="ECO:0000305" key="2"/>
<sequence>MARTEYSNKLTGDNIARAKANELGCSPKHAVEIAHLVRNMMADDAVAYLEQVIDLKRAVPFHRFNRNVSHQKSLNGKTFGTAAGRYPVKAAAEYVRLIRSAQKNAEYAGLAPEKMVIIHAAANKGRCIKGIFPRAMGRATPKHKDSVNVEIILREVQ</sequence>
<reference key="1">
    <citation type="journal article" date="2009" name="Stand. Genomic Sci.">
        <title>Complete genome sequence of Methanocorpusculum labreanum type strain Z.</title>
        <authorList>
            <person name="Anderson I.J."/>
            <person name="Sieprawska-Lupa M."/>
            <person name="Goltsman E."/>
            <person name="Lapidus A."/>
            <person name="Copeland A."/>
            <person name="Glavina Del Rio T."/>
            <person name="Tice H."/>
            <person name="Dalin E."/>
            <person name="Barry K."/>
            <person name="Pitluck S."/>
            <person name="Hauser L."/>
            <person name="Land M."/>
            <person name="Lucas S."/>
            <person name="Richardson P."/>
            <person name="Whitman W.B."/>
            <person name="Kyrpides N.C."/>
        </authorList>
    </citation>
    <scope>NUCLEOTIDE SEQUENCE [LARGE SCALE GENOMIC DNA]</scope>
    <source>
        <strain>ATCC 43576 / DSM 4855 / Z</strain>
    </source>
</reference>
<protein>
    <recommendedName>
        <fullName evidence="1">Large ribosomal subunit protein uL22</fullName>
    </recommendedName>
    <alternativeName>
        <fullName evidence="2">50S ribosomal protein L22</fullName>
    </alternativeName>
</protein>
<proteinExistence type="inferred from homology"/>
<organism>
    <name type="scientific">Methanocorpusculum labreanum (strain ATCC 43576 / DSM 4855 / Z)</name>
    <dbReference type="NCBI Taxonomy" id="410358"/>
    <lineage>
        <taxon>Archaea</taxon>
        <taxon>Methanobacteriati</taxon>
        <taxon>Methanobacteriota</taxon>
        <taxon>Stenosarchaea group</taxon>
        <taxon>Methanomicrobia</taxon>
        <taxon>Methanomicrobiales</taxon>
        <taxon>Methanocorpusculaceae</taxon>
        <taxon>Methanocorpusculum</taxon>
    </lineage>
</organism>
<accession>A2SPK8</accession>